<sequence length="123" mass="13896">EVKLVESGGGLVQPGGSLRLSCATSGFTFSDFYMEWVRQPPGKRLEWIAASRNKANDYTTEYSASVKGRFIVSRDTSQSILYLQMNALRAEDTAIYYCARDYYDYPHWYFDVWGAGTTVTVSS</sequence>
<dbReference type="PIR" id="A30539">
    <property type="entry name" value="A30539"/>
</dbReference>
<dbReference type="PIR" id="B30540">
    <property type="entry name" value="B30540"/>
</dbReference>
<dbReference type="PIR" id="B93857">
    <property type="entry name" value="AVMS51"/>
</dbReference>
<dbReference type="PIR" id="D93256">
    <property type="entry name" value="AVMSH6"/>
</dbReference>
<dbReference type="PIR" id="E30539">
    <property type="entry name" value="E30539"/>
</dbReference>
<dbReference type="PIR" id="H30539">
    <property type="entry name" value="H30539"/>
</dbReference>
<dbReference type="PIR" id="I30538">
    <property type="entry name" value="I30538"/>
</dbReference>
<dbReference type="PIR" id="PT0354">
    <property type="entry name" value="PT0354"/>
</dbReference>
<dbReference type="SMR" id="P01791"/>
<dbReference type="FunCoup" id="P01791">
    <property type="interactions" value="557"/>
</dbReference>
<dbReference type="InParanoid" id="P01791"/>
<dbReference type="Proteomes" id="UP000000589">
    <property type="component" value="Unplaced"/>
</dbReference>
<dbReference type="RNAct" id="P01791">
    <property type="molecule type" value="protein"/>
</dbReference>
<dbReference type="GO" id="GO:0005576">
    <property type="term" value="C:extracellular region"/>
    <property type="evidence" value="ECO:0007669"/>
    <property type="project" value="UniProtKB-ARBA"/>
</dbReference>
<dbReference type="GO" id="GO:0019814">
    <property type="term" value="C:immunoglobulin complex"/>
    <property type="evidence" value="ECO:0007669"/>
    <property type="project" value="UniProtKB-KW"/>
</dbReference>
<dbReference type="GO" id="GO:0003823">
    <property type="term" value="F:antigen binding"/>
    <property type="evidence" value="ECO:0000318"/>
    <property type="project" value="GO_Central"/>
</dbReference>
<dbReference type="GO" id="GO:0016064">
    <property type="term" value="P:immunoglobulin mediated immune response"/>
    <property type="evidence" value="ECO:0000318"/>
    <property type="project" value="GO_Central"/>
</dbReference>
<dbReference type="CDD" id="cd04981">
    <property type="entry name" value="IgV_H"/>
    <property type="match status" value="1"/>
</dbReference>
<dbReference type="FunFam" id="2.60.40.10:FF:001372">
    <property type="entry name" value="Ig heavy chain V region M603"/>
    <property type="match status" value="1"/>
</dbReference>
<dbReference type="Gene3D" id="2.60.40.10">
    <property type="entry name" value="Immunoglobulins"/>
    <property type="match status" value="1"/>
</dbReference>
<dbReference type="InterPro" id="IPR007110">
    <property type="entry name" value="Ig-like_dom"/>
</dbReference>
<dbReference type="InterPro" id="IPR036179">
    <property type="entry name" value="Ig-like_dom_sf"/>
</dbReference>
<dbReference type="InterPro" id="IPR013783">
    <property type="entry name" value="Ig-like_fold"/>
</dbReference>
<dbReference type="InterPro" id="IPR003599">
    <property type="entry name" value="Ig_sub"/>
</dbReference>
<dbReference type="InterPro" id="IPR013106">
    <property type="entry name" value="Ig_V-set"/>
</dbReference>
<dbReference type="InterPro" id="IPR050199">
    <property type="entry name" value="IgHV"/>
</dbReference>
<dbReference type="PANTHER" id="PTHR23266">
    <property type="entry name" value="IMMUNOGLOBULIN HEAVY CHAIN"/>
    <property type="match status" value="1"/>
</dbReference>
<dbReference type="Pfam" id="PF07686">
    <property type="entry name" value="V-set"/>
    <property type="match status" value="1"/>
</dbReference>
<dbReference type="SMART" id="SM00409">
    <property type="entry name" value="IG"/>
    <property type="match status" value="1"/>
</dbReference>
<dbReference type="SMART" id="SM00406">
    <property type="entry name" value="IGv"/>
    <property type="match status" value="1"/>
</dbReference>
<dbReference type="SUPFAM" id="SSF48726">
    <property type="entry name" value="Immunoglobulin"/>
    <property type="match status" value="1"/>
</dbReference>
<dbReference type="PROSITE" id="PS50835">
    <property type="entry name" value="IG_LIKE"/>
    <property type="match status" value="1"/>
</dbReference>
<proteinExistence type="evidence at protein level"/>
<comment type="miscellaneous">
    <text>This chain was isolated from a myeloma protein that binds phosphorylcholine.</text>
</comment>
<name>HVM22_MOUSE</name>
<keyword id="KW-1064">Adaptive immunity</keyword>
<keyword id="KW-0903">Direct protein sequencing</keyword>
<keyword id="KW-0374">Hybridoma</keyword>
<keyword id="KW-0391">Immunity</keyword>
<keyword id="KW-1280">Immunoglobulin</keyword>
<keyword id="KW-1185">Reference proteome</keyword>
<organism>
    <name type="scientific">Mus musculus</name>
    <name type="common">Mouse</name>
    <dbReference type="NCBI Taxonomy" id="10090"/>
    <lineage>
        <taxon>Eukaryota</taxon>
        <taxon>Metazoa</taxon>
        <taxon>Chordata</taxon>
        <taxon>Craniata</taxon>
        <taxon>Vertebrata</taxon>
        <taxon>Euteleostomi</taxon>
        <taxon>Mammalia</taxon>
        <taxon>Eutheria</taxon>
        <taxon>Euarchontoglires</taxon>
        <taxon>Glires</taxon>
        <taxon>Rodentia</taxon>
        <taxon>Myomorpha</taxon>
        <taxon>Muroidea</taxon>
        <taxon>Muridae</taxon>
        <taxon>Murinae</taxon>
        <taxon>Mus</taxon>
        <taxon>Mus</taxon>
    </lineage>
</organism>
<protein>
    <recommendedName>
        <fullName>Ig heavy chain V region HPCM6</fullName>
    </recommendedName>
</protein>
<feature type="chain" id="PRO_0000059877" description="Ig heavy chain V region HPCM6">
    <location>
        <begin position="1"/>
        <end position="123" status="greater than"/>
    </location>
</feature>
<feature type="domain" description="Ig-like">
    <location>
        <begin position="1"/>
        <end position="114"/>
    </location>
</feature>
<feature type="non-terminal residue">
    <location>
        <position position="123"/>
    </location>
</feature>
<reference key="1">
    <citation type="journal article" date="1981" name="Nature">
        <title>IgG antibodies to phosphorylcholine exhibit more diversity than their IgM counterparts.</title>
        <authorList>
            <person name="Gearhart P.J."/>
            <person name="Johnson N.D."/>
            <person name="Douglas R."/>
            <person name="Hood L."/>
        </authorList>
    </citation>
    <scope>PROTEIN SEQUENCE</scope>
</reference>
<accession>P01791</accession>